<feature type="chain" id="PRO_0000296769" description="Probable potassium transport system protein Kup">
    <location>
        <begin position="1"/>
        <end position="666"/>
    </location>
</feature>
<feature type="transmembrane region" description="Helical" evidence="1">
    <location>
        <begin position="16"/>
        <end position="36"/>
    </location>
</feature>
<feature type="transmembrane region" description="Helical" evidence="1">
    <location>
        <begin position="58"/>
        <end position="78"/>
    </location>
</feature>
<feature type="transmembrane region" description="Helical" evidence="1">
    <location>
        <begin position="100"/>
        <end position="120"/>
    </location>
</feature>
<feature type="transmembrane region" description="Helical" evidence="1">
    <location>
        <begin position="141"/>
        <end position="161"/>
    </location>
</feature>
<feature type="transmembrane region" description="Helical" evidence="1">
    <location>
        <begin position="165"/>
        <end position="185"/>
    </location>
</feature>
<feature type="transmembrane region" description="Helical" evidence="1">
    <location>
        <begin position="221"/>
        <end position="241"/>
    </location>
</feature>
<feature type="transmembrane region" description="Helical" evidence="1">
    <location>
        <begin position="253"/>
        <end position="273"/>
    </location>
</feature>
<feature type="transmembrane region" description="Helical" evidence="1">
    <location>
        <begin position="292"/>
        <end position="312"/>
    </location>
</feature>
<feature type="transmembrane region" description="Helical" evidence="1">
    <location>
        <begin position="343"/>
        <end position="363"/>
    </location>
</feature>
<feature type="transmembrane region" description="Helical" evidence="1">
    <location>
        <begin position="373"/>
        <end position="393"/>
    </location>
</feature>
<feature type="transmembrane region" description="Helical" evidence="1">
    <location>
        <begin position="399"/>
        <end position="419"/>
    </location>
</feature>
<feature type="transmembrane region" description="Helical" evidence="1">
    <location>
        <begin position="424"/>
        <end position="444"/>
    </location>
</feature>
<proteinExistence type="inferred from homology"/>
<sequence>MSDSHLTAFDKASKAGFIIALGIVYGDIGTSPLYTMQSLVENQGGVNQVSESFILGSISLIIWTLTLITTIKYVLIALKADNHHEGGIFSLFTLVRKMSPWLIIPAMIGGATLLSDGALTPAVTVTSAIEGLKAVPGLSHIYQNQTNVIITTLVILIVLFGIQRFGTGFIGKIFGPVMFIWFSFLGVSGFFNTLGHLEIFKAINPYYALHLLFSPENHRGIFILGSIFLATTGAEALYSDLGHVGRGNIYVSWPFVKMCIVLSYCGQAAWILANKHSGIELNPFFASVPSQLTVYVVILATLAAIIASQALISGSFTLVSEAMRLKIFPLFRVTYPGANLGQLYIPVINWILFAVTSCTVLYFRTSAHMEAAYGLAITITMLMTTILLNYYLIKEGVKPFLAHLVMTFFALVEFIFFWASAVKFMHGGYVVVILALAIVFVMFIWHAGTRIVFKYVKSLNLNDYKEQIKQLRDDVCFDLYQTNVVYLSNRMQDYMIDRSILYSILDKRPKRARVYWFVNVQVTDEPYTAKYKVDMMGTDYMVRVNLYLGFRMPQTVPRYLRTIVQDLMESGRLPKQEQEYTITPGRDVGDFRFVLIEERVSNARQLSNFERFIMQTKASIKHVTASPMRWFGLQYSEVTLEVVPLILSDVLKLPIKELVPVEDSEA</sequence>
<keyword id="KW-1003">Cell membrane</keyword>
<keyword id="KW-0406">Ion transport</keyword>
<keyword id="KW-0472">Membrane</keyword>
<keyword id="KW-0630">Potassium</keyword>
<keyword id="KW-0633">Potassium transport</keyword>
<keyword id="KW-0769">Symport</keyword>
<keyword id="KW-0812">Transmembrane</keyword>
<keyword id="KW-1133">Transmembrane helix</keyword>
<keyword id="KW-0813">Transport</keyword>
<comment type="function">
    <text evidence="1">Transport of potassium into the cell. Likely operates as a K(+):H(+) symporter.</text>
</comment>
<comment type="catalytic activity">
    <reaction evidence="1">
        <text>K(+)(in) + H(+)(in) = K(+)(out) + H(+)(out)</text>
        <dbReference type="Rhea" id="RHEA:28490"/>
        <dbReference type="ChEBI" id="CHEBI:15378"/>
        <dbReference type="ChEBI" id="CHEBI:29103"/>
    </reaction>
    <physiologicalReaction direction="right-to-left" evidence="1">
        <dbReference type="Rhea" id="RHEA:28492"/>
    </physiologicalReaction>
</comment>
<comment type="subcellular location">
    <subcellularLocation>
        <location evidence="1">Cell membrane</location>
        <topology evidence="1">Multi-pass membrane protein</topology>
    </subcellularLocation>
</comment>
<comment type="similarity">
    <text evidence="1">Belongs to the HAK/KUP transporter (TC 2.A.72) family.</text>
</comment>
<organism>
    <name type="scientific">Streptococcus pyogenes serotype M5 (strain Manfredo)</name>
    <dbReference type="NCBI Taxonomy" id="160491"/>
    <lineage>
        <taxon>Bacteria</taxon>
        <taxon>Bacillati</taxon>
        <taxon>Bacillota</taxon>
        <taxon>Bacilli</taxon>
        <taxon>Lactobacillales</taxon>
        <taxon>Streptococcaceae</taxon>
        <taxon>Streptococcus</taxon>
    </lineage>
</organism>
<gene>
    <name evidence="1" type="primary">kup</name>
    <name type="ordered locus">SpyM50707</name>
</gene>
<reference key="1">
    <citation type="journal article" date="2007" name="J. Bacteriol.">
        <title>Complete genome of acute rheumatic fever-associated serotype M5 Streptococcus pyogenes strain Manfredo.</title>
        <authorList>
            <person name="Holden M.T.G."/>
            <person name="Scott A."/>
            <person name="Cherevach I."/>
            <person name="Chillingworth T."/>
            <person name="Churcher C."/>
            <person name="Cronin A."/>
            <person name="Dowd L."/>
            <person name="Feltwell T."/>
            <person name="Hamlin N."/>
            <person name="Holroyd S."/>
            <person name="Jagels K."/>
            <person name="Moule S."/>
            <person name="Mungall K."/>
            <person name="Quail M.A."/>
            <person name="Price C."/>
            <person name="Rabbinowitsch E."/>
            <person name="Sharp S."/>
            <person name="Skelton J."/>
            <person name="Whitehead S."/>
            <person name="Barrell B.G."/>
            <person name="Kehoe M."/>
            <person name="Parkhill J."/>
        </authorList>
    </citation>
    <scope>NUCLEOTIDE SEQUENCE [LARGE SCALE GENOMIC DNA]</scope>
    <source>
        <strain>Manfredo</strain>
    </source>
</reference>
<evidence type="ECO:0000255" key="1">
    <source>
        <dbReference type="HAMAP-Rule" id="MF_01522"/>
    </source>
</evidence>
<protein>
    <recommendedName>
        <fullName evidence="1">Probable potassium transport system protein Kup</fullName>
    </recommendedName>
</protein>
<dbReference type="EMBL" id="AM295007">
    <property type="protein sequence ID" value="CAM30040.1"/>
    <property type="molecule type" value="Genomic_DNA"/>
</dbReference>
<dbReference type="RefSeq" id="WP_011888791.1">
    <property type="nucleotide sequence ID" value="NC_009332.1"/>
</dbReference>
<dbReference type="KEGG" id="spf:SpyM50707"/>
<dbReference type="HOGENOM" id="CLU_008142_4_1_9"/>
<dbReference type="GO" id="GO:0005886">
    <property type="term" value="C:plasma membrane"/>
    <property type="evidence" value="ECO:0007669"/>
    <property type="project" value="UniProtKB-SubCell"/>
</dbReference>
<dbReference type="GO" id="GO:0015079">
    <property type="term" value="F:potassium ion transmembrane transporter activity"/>
    <property type="evidence" value="ECO:0007669"/>
    <property type="project" value="UniProtKB-UniRule"/>
</dbReference>
<dbReference type="GO" id="GO:0015293">
    <property type="term" value="F:symporter activity"/>
    <property type="evidence" value="ECO:0007669"/>
    <property type="project" value="UniProtKB-UniRule"/>
</dbReference>
<dbReference type="HAMAP" id="MF_01522">
    <property type="entry name" value="Kup"/>
    <property type="match status" value="1"/>
</dbReference>
<dbReference type="InterPro" id="IPR003855">
    <property type="entry name" value="K+_transporter"/>
</dbReference>
<dbReference type="InterPro" id="IPR053952">
    <property type="entry name" value="K_trans_C"/>
</dbReference>
<dbReference type="InterPro" id="IPR053951">
    <property type="entry name" value="K_trans_N"/>
</dbReference>
<dbReference type="InterPro" id="IPR023051">
    <property type="entry name" value="Kup"/>
</dbReference>
<dbReference type="PANTHER" id="PTHR30540:SF83">
    <property type="entry name" value="K+ POTASSIUM TRANSPORTER"/>
    <property type="match status" value="1"/>
</dbReference>
<dbReference type="PANTHER" id="PTHR30540">
    <property type="entry name" value="OSMOTIC STRESS POTASSIUM TRANSPORTER"/>
    <property type="match status" value="1"/>
</dbReference>
<dbReference type="Pfam" id="PF02705">
    <property type="entry name" value="K_trans"/>
    <property type="match status" value="1"/>
</dbReference>
<dbReference type="Pfam" id="PF22776">
    <property type="entry name" value="K_trans_C"/>
    <property type="match status" value="1"/>
</dbReference>
<name>KUP_STRPG</name>
<accession>A2RDW5</accession>